<proteinExistence type="inferred from homology"/>
<protein>
    <recommendedName>
        <fullName evidence="1">Tetraacyldisaccharide 4'-kinase</fullName>
        <ecNumber evidence="1">2.7.1.130</ecNumber>
    </recommendedName>
    <alternativeName>
        <fullName evidence="1">Lipid A 4'-kinase</fullName>
    </alternativeName>
</protein>
<gene>
    <name evidence="1" type="primary">lpxK</name>
    <name type="ordered locus">BT_1880</name>
</gene>
<dbReference type="EC" id="2.7.1.130" evidence="1"/>
<dbReference type="EMBL" id="AE015928">
    <property type="protein sequence ID" value="AAO76987.1"/>
    <property type="molecule type" value="Genomic_DNA"/>
</dbReference>
<dbReference type="RefSeq" id="NP_810793.1">
    <property type="nucleotide sequence ID" value="NC_004663.1"/>
</dbReference>
<dbReference type="RefSeq" id="WP_008765467.1">
    <property type="nucleotide sequence ID" value="NC_004663.1"/>
</dbReference>
<dbReference type="SMR" id="Q8A6K1"/>
<dbReference type="STRING" id="226186.BT_1880"/>
<dbReference type="PaxDb" id="226186-BT_1880"/>
<dbReference type="DNASU" id="1076171"/>
<dbReference type="EnsemblBacteria" id="AAO76987">
    <property type="protein sequence ID" value="AAO76987"/>
    <property type="gene ID" value="BT_1880"/>
</dbReference>
<dbReference type="GeneID" id="60927867"/>
<dbReference type="KEGG" id="bth:BT_1880"/>
<dbReference type="PATRIC" id="fig|226186.12.peg.1932"/>
<dbReference type="eggNOG" id="COG1663">
    <property type="taxonomic scope" value="Bacteria"/>
</dbReference>
<dbReference type="HOGENOM" id="CLU_038816_6_0_10"/>
<dbReference type="InParanoid" id="Q8A6K1"/>
<dbReference type="OrthoDB" id="9766423at2"/>
<dbReference type="UniPathway" id="UPA00359">
    <property type="reaction ID" value="UER00482"/>
</dbReference>
<dbReference type="Proteomes" id="UP000001414">
    <property type="component" value="Chromosome"/>
</dbReference>
<dbReference type="GO" id="GO:0005886">
    <property type="term" value="C:plasma membrane"/>
    <property type="evidence" value="ECO:0000318"/>
    <property type="project" value="GO_Central"/>
</dbReference>
<dbReference type="GO" id="GO:0005524">
    <property type="term" value="F:ATP binding"/>
    <property type="evidence" value="ECO:0007669"/>
    <property type="project" value="UniProtKB-UniRule"/>
</dbReference>
<dbReference type="GO" id="GO:0009029">
    <property type="term" value="F:tetraacyldisaccharide 4'-kinase activity"/>
    <property type="evidence" value="ECO:0000318"/>
    <property type="project" value="GO_Central"/>
</dbReference>
<dbReference type="GO" id="GO:0009245">
    <property type="term" value="P:lipid A biosynthetic process"/>
    <property type="evidence" value="ECO:0000318"/>
    <property type="project" value="GO_Central"/>
</dbReference>
<dbReference type="GO" id="GO:0009244">
    <property type="term" value="P:lipopolysaccharide core region biosynthetic process"/>
    <property type="evidence" value="ECO:0000318"/>
    <property type="project" value="GO_Central"/>
</dbReference>
<dbReference type="HAMAP" id="MF_00409">
    <property type="entry name" value="LpxK"/>
    <property type="match status" value="1"/>
</dbReference>
<dbReference type="InterPro" id="IPR003758">
    <property type="entry name" value="LpxK"/>
</dbReference>
<dbReference type="InterPro" id="IPR027417">
    <property type="entry name" value="P-loop_NTPase"/>
</dbReference>
<dbReference type="NCBIfam" id="TIGR00682">
    <property type="entry name" value="lpxK"/>
    <property type="match status" value="1"/>
</dbReference>
<dbReference type="PANTHER" id="PTHR42724">
    <property type="entry name" value="TETRAACYLDISACCHARIDE 4'-KINASE"/>
    <property type="match status" value="1"/>
</dbReference>
<dbReference type="PANTHER" id="PTHR42724:SF1">
    <property type="entry name" value="TETRAACYLDISACCHARIDE 4'-KINASE, MITOCHONDRIAL-RELATED"/>
    <property type="match status" value="1"/>
</dbReference>
<dbReference type="Pfam" id="PF02606">
    <property type="entry name" value="LpxK"/>
    <property type="match status" value="1"/>
</dbReference>
<dbReference type="SUPFAM" id="SSF52540">
    <property type="entry name" value="P-loop containing nucleoside triphosphate hydrolases"/>
    <property type="match status" value="1"/>
</dbReference>
<sequence length="380" mass="43636">MDEHFIKIHKWLYPVSWIYGAVVTVRNKLFDWGFLRSKSFGVPVICIGNLSVGGTGKTPHTEYLIKLLRDNYHVAVLSRGYKRHSRGYVLATPQSTARSIGDEPYQMHTKFPSVTLAVDENRCHGIEQLLSIKEPSIEVVLLDDAFQHRYVKPGLSILLTDYHRLFCDDTLLPAGRLRESVNGKNRAQIVIVTKCPQDIKPIDYNIITKRLNLYPYQQLYFSSFRYGNLQPVFPSANSEIDSTVNELPLSALTNTDILLVTGIASPAPILEELKMYTDQIDSLSFDDHHHFSHRDIQQIKERFGKLKGEHKLIVTTEKDATRLIHHPVLSEELKPFIYALPIEIEILQNQQDKFNQHIIGYVRENTRNSSFSERENAHQS</sequence>
<reference key="1">
    <citation type="journal article" date="2003" name="Science">
        <title>A genomic view of the human-Bacteroides thetaiotaomicron symbiosis.</title>
        <authorList>
            <person name="Xu J."/>
            <person name="Bjursell M.K."/>
            <person name="Himrod J."/>
            <person name="Deng S."/>
            <person name="Carmichael L.K."/>
            <person name="Chiang H.C."/>
            <person name="Hooper L.V."/>
            <person name="Gordon J.I."/>
        </authorList>
    </citation>
    <scope>NUCLEOTIDE SEQUENCE [LARGE SCALE GENOMIC DNA]</scope>
    <source>
        <strain>ATCC 29148 / DSM 2079 / JCM 5827 / CCUG 10774 / NCTC 10582 / VPI-5482 / E50</strain>
    </source>
</reference>
<feature type="chain" id="PRO_0000340822" description="Tetraacyldisaccharide 4'-kinase">
    <location>
        <begin position="1"/>
        <end position="380"/>
    </location>
</feature>
<feature type="binding site" evidence="1">
    <location>
        <begin position="51"/>
        <end position="58"/>
    </location>
    <ligand>
        <name>ATP</name>
        <dbReference type="ChEBI" id="CHEBI:30616"/>
    </ligand>
</feature>
<name>LPXK_BACTN</name>
<accession>Q8A6K1</accession>
<organism>
    <name type="scientific">Bacteroides thetaiotaomicron (strain ATCC 29148 / DSM 2079 / JCM 5827 / CCUG 10774 / NCTC 10582 / VPI-5482 / E50)</name>
    <dbReference type="NCBI Taxonomy" id="226186"/>
    <lineage>
        <taxon>Bacteria</taxon>
        <taxon>Pseudomonadati</taxon>
        <taxon>Bacteroidota</taxon>
        <taxon>Bacteroidia</taxon>
        <taxon>Bacteroidales</taxon>
        <taxon>Bacteroidaceae</taxon>
        <taxon>Bacteroides</taxon>
    </lineage>
</organism>
<keyword id="KW-0067">ATP-binding</keyword>
<keyword id="KW-0418">Kinase</keyword>
<keyword id="KW-0441">Lipid A biosynthesis</keyword>
<keyword id="KW-0444">Lipid biosynthesis</keyword>
<keyword id="KW-0443">Lipid metabolism</keyword>
<keyword id="KW-0547">Nucleotide-binding</keyword>
<keyword id="KW-1185">Reference proteome</keyword>
<keyword id="KW-0808">Transferase</keyword>
<evidence type="ECO:0000255" key="1">
    <source>
        <dbReference type="HAMAP-Rule" id="MF_00409"/>
    </source>
</evidence>
<comment type="function">
    <text evidence="1">Transfers the gamma-phosphate of ATP to the 4'-position of a tetraacyldisaccharide 1-phosphate intermediate (termed DS-1-P) to form tetraacyldisaccharide 1,4'-bis-phosphate (lipid IVA).</text>
</comment>
<comment type="catalytic activity">
    <reaction evidence="1">
        <text>a lipid A disaccharide + ATP = a lipid IVA + ADP + H(+)</text>
        <dbReference type="Rhea" id="RHEA:67840"/>
        <dbReference type="ChEBI" id="CHEBI:15378"/>
        <dbReference type="ChEBI" id="CHEBI:30616"/>
        <dbReference type="ChEBI" id="CHEBI:176343"/>
        <dbReference type="ChEBI" id="CHEBI:176425"/>
        <dbReference type="ChEBI" id="CHEBI:456216"/>
        <dbReference type="EC" id="2.7.1.130"/>
    </reaction>
</comment>
<comment type="pathway">
    <text evidence="1">Glycolipid biosynthesis; lipid IV(A) biosynthesis; lipid IV(A) from (3R)-3-hydroxytetradecanoyl-[acyl-carrier-protein] and UDP-N-acetyl-alpha-D-glucosamine: step 6/6.</text>
</comment>
<comment type="similarity">
    <text evidence="1">Belongs to the LpxK family.</text>
</comment>